<keyword id="KW-0025">Alternative splicing</keyword>
<keyword id="KW-0175">Coiled coil</keyword>
<keyword id="KW-1267">Proteomics identification</keyword>
<keyword id="KW-1185">Reference proteome</keyword>
<keyword id="KW-0728">SH3 domain</keyword>
<name>SH321_HUMAN</name>
<evidence type="ECO:0000255" key="1"/>
<evidence type="ECO:0000255" key="2">
    <source>
        <dbReference type="PROSITE-ProRule" id="PRU00192"/>
    </source>
</evidence>
<evidence type="ECO:0000256" key="3">
    <source>
        <dbReference type="SAM" id="MobiDB-lite"/>
    </source>
</evidence>
<evidence type="ECO:0000303" key="4">
    <source>
    </source>
</evidence>
<evidence type="ECO:0000303" key="5">
    <source>
    </source>
</evidence>
<evidence type="ECO:0000305" key="6"/>
<accession>A4FU49</accession>
<accession>B4DLI6</accession>
<accession>D3DPS6</accession>
<accession>J3KQM5</accession>
<accession>Q5VTK7</accession>
<accession>Q86XZ6</accession>
<accession>Q8N445</accession>
<accession>Q96DN4</accession>
<accession>Q9H5W5</accession>
<dbReference type="EMBL" id="AK026591">
    <property type="protein sequence ID" value="BAB15504.1"/>
    <property type="status" value="ALT_INIT"/>
    <property type="molecule type" value="mRNA"/>
</dbReference>
<dbReference type="EMBL" id="AK297015">
    <property type="protein sequence ID" value="BAG59548.1"/>
    <property type="molecule type" value="mRNA"/>
</dbReference>
<dbReference type="EMBL" id="AK056459">
    <property type="protein sequence ID" value="BAB71191.1"/>
    <property type="status" value="ALT_SEQ"/>
    <property type="molecule type" value="mRNA"/>
</dbReference>
<dbReference type="EMBL" id="AL591845">
    <property type="status" value="NOT_ANNOTATED_CDS"/>
    <property type="molecule type" value="Genomic_DNA"/>
</dbReference>
<dbReference type="EMBL" id="CH471059">
    <property type="protein sequence ID" value="EAX07374.1"/>
    <property type="molecule type" value="Genomic_DNA"/>
</dbReference>
<dbReference type="EMBL" id="CH471059">
    <property type="protein sequence ID" value="EAX07375.1"/>
    <property type="status" value="ALT_SEQ"/>
    <property type="molecule type" value="Genomic_DNA"/>
</dbReference>
<dbReference type="EMBL" id="CH471059">
    <property type="protein sequence ID" value="EAX07376.1"/>
    <property type="status" value="ALT_SEQ"/>
    <property type="molecule type" value="Genomic_DNA"/>
</dbReference>
<dbReference type="EMBL" id="BC036763">
    <property type="protein sequence ID" value="AAH36763.1"/>
    <property type="molecule type" value="mRNA"/>
</dbReference>
<dbReference type="EMBL" id="BC048273">
    <property type="protein sequence ID" value="AAH48273.1"/>
    <property type="molecule type" value="mRNA"/>
</dbReference>
<dbReference type="EMBL" id="BC101676">
    <property type="protein sequence ID" value="AAI01677.1"/>
    <property type="status" value="ALT_SEQ"/>
    <property type="molecule type" value="mRNA"/>
</dbReference>
<dbReference type="EMBL" id="BC101678">
    <property type="protein sequence ID" value="AAI01679.1"/>
    <property type="status" value="ALT_SEQ"/>
    <property type="molecule type" value="mRNA"/>
</dbReference>
<dbReference type="CCDS" id="CCDS30674.2">
    <molecule id="A4FU49-3"/>
</dbReference>
<dbReference type="RefSeq" id="NP_001156002.1">
    <molecule id="A4FU49-6"/>
    <property type="nucleotide sequence ID" value="NM_001162530.2"/>
</dbReference>
<dbReference type="RefSeq" id="NP_078952.4">
    <molecule id="A4FU49-3"/>
    <property type="nucleotide sequence ID" value="NM_024676.4"/>
</dbReference>
<dbReference type="RefSeq" id="XP_016857835.1">
    <property type="nucleotide sequence ID" value="XM_017002346.1"/>
</dbReference>
<dbReference type="SMR" id="A4FU49"/>
<dbReference type="BioGRID" id="122844">
    <property type="interactions" value="4"/>
</dbReference>
<dbReference type="FunCoup" id="A4FU49">
    <property type="interactions" value="101"/>
</dbReference>
<dbReference type="IntAct" id="A4FU49">
    <property type="interactions" value="5"/>
</dbReference>
<dbReference type="MINT" id="A4FU49"/>
<dbReference type="STRING" id="9606.ENSP00000421294"/>
<dbReference type="GlyGen" id="A4FU49">
    <property type="glycosylation" value="1 site, 1 O-linked glycan (1 site)"/>
</dbReference>
<dbReference type="iPTMnet" id="A4FU49"/>
<dbReference type="PhosphoSitePlus" id="A4FU49"/>
<dbReference type="BioMuta" id="SH3D21"/>
<dbReference type="jPOST" id="A4FU49"/>
<dbReference type="MassIVE" id="A4FU49"/>
<dbReference type="PaxDb" id="9606-ENSP00000421294"/>
<dbReference type="PeptideAtlas" id="A4FU49"/>
<dbReference type="ProteomicsDB" id="663">
    <molecule id="A4FU49-1"/>
</dbReference>
<dbReference type="ProteomicsDB" id="664">
    <molecule id="A4FU49-3"/>
</dbReference>
<dbReference type="ProteomicsDB" id="666">
    <molecule id="A4FU49-5"/>
</dbReference>
<dbReference type="Antibodypedia" id="51050">
    <property type="antibodies" value="54 antibodies from 9 providers"/>
</dbReference>
<dbReference type="DNASU" id="79729"/>
<dbReference type="Ensembl" id="ENST00000453908.8">
    <molecule id="A4FU49-6"/>
    <property type="protein sequence ID" value="ENSP00000403476.2"/>
    <property type="gene ID" value="ENSG00000214193.11"/>
</dbReference>
<dbReference type="Ensembl" id="ENST00000505871.7">
    <molecule id="A4FU49-3"/>
    <property type="protein sequence ID" value="ENSP00000421294.1"/>
    <property type="gene ID" value="ENSG00000214193.11"/>
</dbReference>
<dbReference type="GeneID" id="79729"/>
<dbReference type="KEGG" id="hsa:79729"/>
<dbReference type="MANE-Select" id="ENST00000453908.8">
    <molecule id="A4FU49-6"/>
    <property type="protein sequence ID" value="ENSP00000403476.2"/>
    <property type="RefSeq nucleotide sequence ID" value="NM_001162530.2"/>
    <property type="RefSeq protein sequence ID" value="NP_001156002.1"/>
</dbReference>
<dbReference type="UCSC" id="uc010oia.2">
    <molecule id="A4FU49-1"/>
    <property type="organism name" value="human"/>
</dbReference>
<dbReference type="AGR" id="HGNC:26236"/>
<dbReference type="CTD" id="79729"/>
<dbReference type="DisGeNET" id="79729"/>
<dbReference type="GeneCards" id="SH3D21"/>
<dbReference type="HGNC" id="HGNC:26236">
    <property type="gene designation" value="SH3D21"/>
</dbReference>
<dbReference type="HPA" id="ENSG00000214193">
    <property type="expression patterns" value="Tissue enhanced (intestine, thyroid gland)"/>
</dbReference>
<dbReference type="neXtProt" id="NX_A4FU49"/>
<dbReference type="OpenTargets" id="ENSG00000214193"/>
<dbReference type="PharmGKB" id="PA142672497"/>
<dbReference type="VEuPathDB" id="HostDB:ENSG00000214193"/>
<dbReference type="eggNOG" id="KOG4348">
    <property type="taxonomic scope" value="Eukaryota"/>
</dbReference>
<dbReference type="GeneTree" id="ENSGT00940000160627"/>
<dbReference type="HOGENOM" id="CLU_029596_1_0_1"/>
<dbReference type="InParanoid" id="A4FU49"/>
<dbReference type="OMA" id="KGPRVNK"/>
<dbReference type="OrthoDB" id="73680at2759"/>
<dbReference type="PAN-GO" id="A4FU49">
    <property type="GO annotations" value="2 GO annotations based on evolutionary models"/>
</dbReference>
<dbReference type="PhylomeDB" id="A4FU49"/>
<dbReference type="TreeFam" id="TF351294"/>
<dbReference type="PathwayCommons" id="A4FU49"/>
<dbReference type="SignaLink" id="A4FU49"/>
<dbReference type="BioGRID-ORCS" id="79729">
    <property type="hits" value="8 hits in 1116 CRISPR screens"/>
</dbReference>
<dbReference type="ChiTaRS" id="SH3D21">
    <property type="organism name" value="human"/>
</dbReference>
<dbReference type="GenomeRNAi" id="79729"/>
<dbReference type="Pharos" id="A4FU49">
    <property type="development level" value="Tdark"/>
</dbReference>
<dbReference type="PRO" id="PR:A4FU49"/>
<dbReference type="Proteomes" id="UP000005640">
    <property type="component" value="Chromosome 1"/>
</dbReference>
<dbReference type="RNAct" id="A4FU49">
    <property type="molecule type" value="protein"/>
</dbReference>
<dbReference type="Bgee" id="ENSG00000214193">
    <property type="expression patterns" value="Expressed in right lobe of thyroid gland and 147 other cell types or tissues"/>
</dbReference>
<dbReference type="ExpressionAtlas" id="A4FU49">
    <property type="expression patterns" value="baseline and differential"/>
</dbReference>
<dbReference type="GO" id="GO:0007015">
    <property type="term" value="P:actin filament organization"/>
    <property type="evidence" value="ECO:0000318"/>
    <property type="project" value="GO_Central"/>
</dbReference>
<dbReference type="GO" id="GO:0016477">
    <property type="term" value="P:cell migration"/>
    <property type="evidence" value="ECO:0000318"/>
    <property type="project" value="GO_Central"/>
</dbReference>
<dbReference type="CDD" id="cd12142">
    <property type="entry name" value="SH3_D21-like"/>
    <property type="match status" value="1"/>
</dbReference>
<dbReference type="FunFam" id="2.30.30.40:FF:000263">
    <property type="entry name" value="SH3 domain-containing protein 21"/>
    <property type="match status" value="1"/>
</dbReference>
<dbReference type="Gene3D" id="2.30.30.40">
    <property type="entry name" value="SH3 Domains"/>
    <property type="match status" value="1"/>
</dbReference>
<dbReference type="InterPro" id="IPR050384">
    <property type="entry name" value="Endophilin_SH3RF"/>
</dbReference>
<dbReference type="InterPro" id="IPR036028">
    <property type="entry name" value="SH3-like_dom_sf"/>
</dbReference>
<dbReference type="InterPro" id="IPR001452">
    <property type="entry name" value="SH3_domain"/>
</dbReference>
<dbReference type="InterPro" id="IPR035468">
    <property type="entry name" value="SH3D21_SH3"/>
</dbReference>
<dbReference type="PANTHER" id="PTHR14167">
    <property type="entry name" value="SH3 DOMAIN-CONTAINING"/>
    <property type="match status" value="1"/>
</dbReference>
<dbReference type="PANTHER" id="PTHR14167:SF28">
    <property type="entry name" value="SH3 DOMAIN-CONTAINING PROTEIN 21"/>
    <property type="match status" value="1"/>
</dbReference>
<dbReference type="Pfam" id="PF07653">
    <property type="entry name" value="SH3_2"/>
    <property type="match status" value="1"/>
</dbReference>
<dbReference type="PRINTS" id="PR00452">
    <property type="entry name" value="SH3DOMAIN"/>
</dbReference>
<dbReference type="PRINTS" id="PR01887">
    <property type="entry name" value="SPECTRNALPHA"/>
</dbReference>
<dbReference type="SMART" id="SM00326">
    <property type="entry name" value="SH3"/>
    <property type="match status" value="1"/>
</dbReference>
<dbReference type="SUPFAM" id="SSF50044">
    <property type="entry name" value="SH3-domain"/>
    <property type="match status" value="1"/>
</dbReference>
<dbReference type="PROSITE" id="PS50002">
    <property type="entry name" value="SH3"/>
    <property type="match status" value="1"/>
</dbReference>
<gene>
    <name type="primary">SH3D21</name>
    <name type="synonym">C1orf113</name>
</gene>
<sequence length="640" mass="70519">MVQSELQLQPRAGGRAEAASWGDRGNDKGGLGNPDMPSVSPGPQRPPKLSSLAYDSPPDYLQTVSHPEVYRVLFDYQPEAPDELALRRGDVVKVLSKTTEDKGWWEGECQGRRGVFPDNFVLPPPPIKKLVPRKVVSRESAPIKEPKKLMPKTSLPTVKKLATATTGPSKAKTSRTPSRDSQKLTSRDSGPNGGFQSGGSYHPGRKRSKTQTPQQRSVSSQEEEHSSPVKAPSVKRTPMPDKTATPERPPAPENAPSSKKIPAPDKVPSPEKTLTLGDKASIPGNSTSGKIPAPDKVPTPEKMVTPEDKASIPENSIIPEETLTVDKPSTPERVFSVEESPALEAPPMDKVPNPKMAPLGDEAPTLEKVLTPELSEEEVSTRDDIQFHHFSSEEALQKVKYFVAKEDPSSQEEAHTPEAPPPQPPSSERCLGEMKCTLVRGDSSPRQAELKSGPASRPALEKPHPHEEATTLPEEAPSNDERTPEEEAPPNEQRPLREEVLPKEGVASKEEVTLKEELPPKEEVAPKEEVPPIERAFAQKTRPIKPPPDSQETLALPSLVPQNYTENKNEGVDVTSLRGEVESLRRALELMEVQLERKLTDIWEELKSEKEQRRRLEVQVMQGTQKSQTPRVIHTQTQTY</sequence>
<protein>
    <recommendedName>
        <fullName>SH3 domain-containing protein 21</fullName>
    </recommendedName>
</protein>
<reference key="1">
    <citation type="journal article" date="2004" name="Nat. Genet.">
        <title>Complete sequencing and characterization of 21,243 full-length human cDNAs.</title>
        <authorList>
            <person name="Ota T."/>
            <person name="Suzuki Y."/>
            <person name="Nishikawa T."/>
            <person name="Otsuki T."/>
            <person name="Sugiyama T."/>
            <person name="Irie R."/>
            <person name="Wakamatsu A."/>
            <person name="Hayashi K."/>
            <person name="Sato H."/>
            <person name="Nagai K."/>
            <person name="Kimura K."/>
            <person name="Makita H."/>
            <person name="Sekine M."/>
            <person name="Obayashi M."/>
            <person name="Nishi T."/>
            <person name="Shibahara T."/>
            <person name="Tanaka T."/>
            <person name="Ishii S."/>
            <person name="Yamamoto J."/>
            <person name="Saito K."/>
            <person name="Kawai Y."/>
            <person name="Isono Y."/>
            <person name="Nakamura Y."/>
            <person name="Nagahari K."/>
            <person name="Murakami K."/>
            <person name="Yasuda T."/>
            <person name="Iwayanagi T."/>
            <person name="Wagatsuma M."/>
            <person name="Shiratori A."/>
            <person name="Sudo H."/>
            <person name="Hosoiri T."/>
            <person name="Kaku Y."/>
            <person name="Kodaira H."/>
            <person name="Kondo H."/>
            <person name="Sugawara M."/>
            <person name="Takahashi M."/>
            <person name="Kanda K."/>
            <person name="Yokoi T."/>
            <person name="Furuya T."/>
            <person name="Kikkawa E."/>
            <person name="Omura Y."/>
            <person name="Abe K."/>
            <person name="Kamihara K."/>
            <person name="Katsuta N."/>
            <person name="Sato K."/>
            <person name="Tanikawa M."/>
            <person name="Yamazaki M."/>
            <person name="Ninomiya K."/>
            <person name="Ishibashi T."/>
            <person name="Yamashita H."/>
            <person name="Murakawa K."/>
            <person name="Fujimori K."/>
            <person name="Tanai H."/>
            <person name="Kimata M."/>
            <person name="Watanabe M."/>
            <person name="Hiraoka S."/>
            <person name="Chiba Y."/>
            <person name="Ishida S."/>
            <person name="Ono Y."/>
            <person name="Takiguchi S."/>
            <person name="Watanabe S."/>
            <person name="Yosida M."/>
            <person name="Hotuta T."/>
            <person name="Kusano J."/>
            <person name="Kanehori K."/>
            <person name="Takahashi-Fujii A."/>
            <person name="Hara H."/>
            <person name="Tanase T.-O."/>
            <person name="Nomura Y."/>
            <person name="Togiya S."/>
            <person name="Komai F."/>
            <person name="Hara R."/>
            <person name="Takeuchi K."/>
            <person name="Arita M."/>
            <person name="Imose N."/>
            <person name="Musashino K."/>
            <person name="Yuuki H."/>
            <person name="Oshima A."/>
            <person name="Sasaki N."/>
            <person name="Aotsuka S."/>
            <person name="Yoshikawa Y."/>
            <person name="Matsunawa H."/>
            <person name="Ichihara T."/>
            <person name="Shiohata N."/>
            <person name="Sano S."/>
            <person name="Moriya S."/>
            <person name="Momiyama H."/>
            <person name="Satoh N."/>
            <person name="Takami S."/>
            <person name="Terashima Y."/>
            <person name="Suzuki O."/>
            <person name="Nakagawa S."/>
            <person name="Senoh A."/>
            <person name="Mizoguchi H."/>
            <person name="Goto Y."/>
            <person name="Shimizu F."/>
            <person name="Wakebe H."/>
            <person name="Hishigaki H."/>
            <person name="Watanabe T."/>
            <person name="Sugiyama A."/>
            <person name="Takemoto M."/>
            <person name="Kawakami B."/>
            <person name="Yamazaki M."/>
            <person name="Watanabe K."/>
            <person name="Kumagai A."/>
            <person name="Itakura S."/>
            <person name="Fukuzumi Y."/>
            <person name="Fujimori Y."/>
            <person name="Komiyama M."/>
            <person name="Tashiro H."/>
            <person name="Tanigami A."/>
            <person name="Fujiwara T."/>
            <person name="Ono T."/>
            <person name="Yamada K."/>
            <person name="Fujii Y."/>
            <person name="Ozaki K."/>
            <person name="Hirao M."/>
            <person name="Ohmori Y."/>
            <person name="Kawabata A."/>
            <person name="Hikiji T."/>
            <person name="Kobatake N."/>
            <person name="Inagaki H."/>
            <person name="Ikema Y."/>
            <person name="Okamoto S."/>
            <person name="Okitani R."/>
            <person name="Kawakami T."/>
            <person name="Noguchi S."/>
            <person name="Itoh T."/>
            <person name="Shigeta K."/>
            <person name="Senba T."/>
            <person name="Matsumura K."/>
            <person name="Nakajima Y."/>
            <person name="Mizuno T."/>
            <person name="Morinaga M."/>
            <person name="Sasaki M."/>
            <person name="Togashi T."/>
            <person name="Oyama M."/>
            <person name="Hata H."/>
            <person name="Watanabe M."/>
            <person name="Komatsu T."/>
            <person name="Mizushima-Sugano J."/>
            <person name="Satoh T."/>
            <person name="Shirai Y."/>
            <person name="Takahashi Y."/>
            <person name="Nakagawa K."/>
            <person name="Okumura K."/>
            <person name="Nagase T."/>
            <person name="Nomura N."/>
            <person name="Kikuchi H."/>
            <person name="Masuho Y."/>
            <person name="Yamashita R."/>
            <person name="Nakai K."/>
            <person name="Yada T."/>
            <person name="Nakamura Y."/>
            <person name="Ohara O."/>
            <person name="Isogai T."/>
            <person name="Sugano S."/>
        </authorList>
    </citation>
    <scope>NUCLEOTIDE SEQUENCE [LARGE SCALE MRNA] (ISOFORMS 2 AND 3)</scope>
    <source>
        <tissue>Signet-ring cell carcinoma</tissue>
        <tissue>Teratocarcinoma</tissue>
        <tissue>Umbilical cord blood</tissue>
    </source>
</reference>
<reference key="2">
    <citation type="journal article" date="2006" name="Nature">
        <title>The DNA sequence and biological annotation of human chromosome 1.</title>
        <authorList>
            <person name="Gregory S.G."/>
            <person name="Barlow K.F."/>
            <person name="McLay K.E."/>
            <person name="Kaul R."/>
            <person name="Swarbreck D."/>
            <person name="Dunham A."/>
            <person name="Scott C.E."/>
            <person name="Howe K.L."/>
            <person name="Woodfine K."/>
            <person name="Spencer C.C.A."/>
            <person name="Jones M.C."/>
            <person name="Gillson C."/>
            <person name="Searle S."/>
            <person name="Zhou Y."/>
            <person name="Kokocinski F."/>
            <person name="McDonald L."/>
            <person name="Evans R."/>
            <person name="Phillips K."/>
            <person name="Atkinson A."/>
            <person name="Cooper R."/>
            <person name="Jones C."/>
            <person name="Hall R.E."/>
            <person name="Andrews T.D."/>
            <person name="Lloyd C."/>
            <person name="Ainscough R."/>
            <person name="Almeida J.P."/>
            <person name="Ambrose K.D."/>
            <person name="Anderson F."/>
            <person name="Andrew R.W."/>
            <person name="Ashwell R.I.S."/>
            <person name="Aubin K."/>
            <person name="Babbage A.K."/>
            <person name="Bagguley C.L."/>
            <person name="Bailey J."/>
            <person name="Beasley H."/>
            <person name="Bethel G."/>
            <person name="Bird C.P."/>
            <person name="Bray-Allen S."/>
            <person name="Brown J.Y."/>
            <person name="Brown A.J."/>
            <person name="Buckley D."/>
            <person name="Burton J."/>
            <person name="Bye J."/>
            <person name="Carder C."/>
            <person name="Chapman J.C."/>
            <person name="Clark S.Y."/>
            <person name="Clarke G."/>
            <person name="Clee C."/>
            <person name="Cobley V."/>
            <person name="Collier R.E."/>
            <person name="Corby N."/>
            <person name="Coville G.J."/>
            <person name="Davies J."/>
            <person name="Deadman R."/>
            <person name="Dunn M."/>
            <person name="Earthrowl M."/>
            <person name="Ellington A.G."/>
            <person name="Errington H."/>
            <person name="Frankish A."/>
            <person name="Frankland J."/>
            <person name="French L."/>
            <person name="Garner P."/>
            <person name="Garnett J."/>
            <person name="Gay L."/>
            <person name="Ghori M.R.J."/>
            <person name="Gibson R."/>
            <person name="Gilby L.M."/>
            <person name="Gillett W."/>
            <person name="Glithero R.J."/>
            <person name="Grafham D.V."/>
            <person name="Griffiths C."/>
            <person name="Griffiths-Jones S."/>
            <person name="Grocock R."/>
            <person name="Hammond S."/>
            <person name="Harrison E.S.I."/>
            <person name="Hart E."/>
            <person name="Haugen E."/>
            <person name="Heath P.D."/>
            <person name="Holmes S."/>
            <person name="Holt K."/>
            <person name="Howden P.J."/>
            <person name="Hunt A.R."/>
            <person name="Hunt S.E."/>
            <person name="Hunter G."/>
            <person name="Isherwood J."/>
            <person name="James R."/>
            <person name="Johnson C."/>
            <person name="Johnson D."/>
            <person name="Joy A."/>
            <person name="Kay M."/>
            <person name="Kershaw J.K."/>
            <person name="Kibukawa M."/>
            <person name="Kimberley A.M."/>
            <person name="King A."/>
            <person name="Knights A.J."/>
            <person name="Lad H."/>
            <person name="Laird G."/>
            <person name="Lawlor S."/>
            <person name="Leongamornlert D.A."/>
            <person name="Lloyd D.M."/>
            <person name="Loveland J."/>
            <person name="Lovell J."/>
            <person name="Lush M.J."/>
            <person name="Lyne R."/>
            <person name="Martin S."/>
            <person name="Mashreghi-Mohammadi M."/>
            <person name="Matthews L."/>
            <person name="Matthews N.S.W."/>
            <person name="McLaren S."/>
            <person name="Milne S."/>
            <person name="Mistry S."/>
            <person name="Moore M.J.F."/>
            <person name="Nickerson T."/>
            <person name="O'Dell C.N."/>
            <person name="Oliver K."/>
            <person name="Palmeiri A."/>
            <person name="Palmer S.A."/>
            <person name="Parker A."/>
            <person name="Patel D."/>
            <person name="Pearce A.V."/>
            <person name="Peck A.I."/>
            <person name="Pelan S."/>
            <person name="Phelps K."/>
            <person name="Phillimore B.J."/>
            <person name="Plumb R."/>
            <person name="Rajan J."/>
            <person name="Raymond C."/>
            <person name="Rouse G."/>
            <person name="Saenphimmachak C."/>
            <person name="Sehra H.K."/>
            <person name="Sheridan E."/>
            <person name="Shownkeen R."/>
            <person name="Sims S."/>
            <person name="Skuce C.D."/>
            <person name="Smith M."/>
            <person name="Steward C."/>
            <person name="Subramanian S."/>
            <person name="Sycamore N."/>
            <person name="Tracey A."/>
            <person name="Tromans A."/>
            <person name="Van Helmond Z."/>
            <person name="Wall M."/>
            <person name="Wallis J.M."/>
            <person name="White S."/>
            <person name="Whitehead S.L."/>
            <person name="Wilkinson J.E."/>
            <person name="Willey D.L."/>
            <person name="Williams H."/>
            <person name="Wilming L."/>
            <person name="Wray P.W."/>
            <person name="Wu Z."/>
            <person name="Coulson A."/>
            <person name="Vaudin M."/>
            <person name="Sulston J.E."/>
            <person name="Durbin R.M."/>
            <person name="Hubbard T."/>
            <person name="Wooster R."/>
            <person name="Dunham I."/>
            <person name="Carter N.P."/>
            <person name="McVean G."/>
            <person name="Ross M.T."/>
            <person name="Harrow J."/>
            <person name="Olson M.V."/>
            <person name="Beck S."/>
            <person name="Rogers J."/>
            <person name="Bentley D.R."/>
        </authorList>
    </citation>
    <scope>NUCLEOTIDE SEQUENCE [LARGE SCALE GENOMIC DNA]</scope>
</reference>
<reference key="3">
    <citation type="submission" date="2005-09" db="EMBL/GenBank/DDBJ databases">
        <authorList>
            <person name="Mural R.J."/>
            <person name="Istrail S."/>
            <person name="Sutton G.G."/>
            <person name="Florea L."/>
            <person name="Halpern A.L."/>
            <person name="Mobarry C.M."/>
            <person name="Lippert R."/>
            <person name="Walenz B."/>
            <person name="Shatkay H."/>
            <person name="Dew I."/>
            <person name="Miller J.R."/>
            <person name="Flanigan M.J."/>
            <person name="Edwards N.J."/>
            <person name="Bolanos R."/>
            <person name="Fasulo D."/>
            <person name="Halldorsson B.V."/>
            <person name="Hannenhalli S."/>
            <person name="Turner R."/>
            <person name="Yooseph S."/>
            <person name="Lu F."/>
            <person name="Nusskern D.R."/>
            <person name="Shue B.C."/>
            <person name="Zheng X.H."/>
            <person name="Zhong F."/>
            <person name="Delcher A.L."/>
            <person name="Huson D.H."/>
            <person name="Kravitz S.A."/>
            <person name="Mouchard L."/>
            <person name="Reinert K."/>
            <person name="Remington K.A."/>
            <person name="Clark A.G."/>
            <person name="Waterman M.S."/>
            <person name="Eichler E.E."/>
            <person name="Adams M.D."/>
            <person name="Hunkapiller M.W."/>
            <person name="Myers E.W."/>
            <person name="Venter J.C."/>
        </authorList>
    </citation>
    <scope>NUCLEOTIDE SEQUENCE [LARGE SCALE GENOMIC DNA]</scope>
</reference>
<reference key="4">
    <citation type="journal article" date="2004" name="Genome Res.">
        <title>The status, quality, and expansion of the NIH full-length cDNA project: the Mammalian Gene Collection (MGC).</title>
        <authorList>
            <consortium name="The MGC Project Team"/>
        </authorList>
    </citation>
    <scope>NUCLEOTIDE SEQUENCE [LARGE SCALE MRNA] OF 162-640 (ISOFORMS 3 AND 4)</scope>
    <scope>NUCLEOTIDE SEQUENCE [LARGE SCALE MRNA] OF 379-640 (ISOFORM 2)</scope>
    <source>
        <tissue>Brain</tissue>
        <tissue>Liver</tissue>
        <tissue>Ovary</tissue>
    </source>
</reference>
<feature type="chain" id="PRO_0000337129" description="SH3 domain-containing protein 21">
    <location>
        <begin position="1"/>
        <end position="640"/>
    </location>
</feature>
<feature type="domain" description="SH3" evidence="2">
    <location>
        <begin position="65"/>
        <end position="126"/>
    </location>
</feature>
<feature type="region of interest" description="Disordered" evidence="3">
    <location>
        <begin position="1"/>
        <end position="60"/>
    </location>
</feature>
<feature type="region of interest" description="Disordered" evidence="3">
    <location>
        <begin position="133"/>
        <end position="361"/>
    </location>
</feature>
<feature type="region of interest" description="Disordered" evidence="3">
    <location>
        <begin position="401"/>
        <end position="551"/>
    </location>
</feature>
<feature type="region of interest" description="Disordered" evidence="3">
    <location>
        <begin position="618"/>
        <end position="640"/>
    </location>
</feature>
<feature type="coiled-coil region" evidence="1">
    <location>
        <begin position="572"/>
        <end position="626"/>
    </location>
</feature>
<feature type="compositionally biased region" description="Basic and acidic residues" evidence="3">
    <location>
        <begin position="177"/>
        <end position="186"/>
    </location>
</feature>
<feature type="compositionally biased region" description="Polar residues" evidence="3">
    <location>
        <begin position="210"/>
        <end position="220"/>
    </location>
</feature>
<feature type="compositionally biased region" description="Basic and acidic residues" evidence="3">
    <location>
        <begin position="401"/>
        <end position="416"/>
    </location>
</feature>
<feature type="compositionally biased region" description="Basic and acidic residues" evidence="3">
    <location>
        <begin position="459"/>
        <end position="469"/>
    </location>
</feature>
<feature type="compositionally biased region" description="Basic and acidic residues" evidence="3">
    <location>
        <begin position="494"/>
        <end position="532"/>
    </location>
</feature>
<feature type="compositionally biased region" description="Polar residues" evidence="3">
    <location>
        <begin position="621"/>
        <end position="640"/>
    </location>
</feature>
<feature type="splice variant" id="VSP_040923" description="In isoform 3." evidence="4 5">
    <original>MVQSELQLQPRAGGRAEAASWGDRGNDKGGLGNPDMPSVSPGPQRPPKLSSLAYDSPPDYLQTVSHPEVYRVLFDYQPEAPDELALRRGDVVKVLS</original>
    <variation>MIKEIEDGWWLGKRNGQLGAFPSNFVELLDSGPPSLGNPDMPSVSPGPQRPP</variation>
    <location>
        <begin position="1"/>
        <end position="96"/>
    </location>
</feature>
<feature type="splice variant" id="VSP_040924" description="In isoform 2." evidence="4 5">
    <original>MVQSELQLQPRAGGRAEAASWGDRGNDKGG</original>
    <variation>MIKEIEDGWWLGKKNGQLGAFPSNFVELLDSGPPS</variation>
    <location>
        <begin position="1"/>
        <end position="30"/>
    </location>
</feature>
<feature type="splice variant" id="VSP_045936" description="In isoform 5." evidence="6">
    <original>MVQSELQLQPRAGGRAEAASWGDRGNDKGG</original>
    <variation>MEVLVLAGYRAQKEDELSLAPGDVVRQVRWVPARGWLRGEFGGRYGLFPERLVQEIPETLRGSGEARRPRCARRRGHPAKHPRPQRWCKVNFSYSPEQADELKLQAGEIVEMIKEIEDGWWLGKKNGQLGAFPSNFVELLDSGPPS</variation>
    <location>
        <begin position="1"/>
        <end position="30"/>
    </location>
</feature>
<feature type="splice variant" id="VSP_040925" description="In isoform 3." evidence="4 5">
    <original>TSRTPSR</original>
    <variation>RKSTAAR</variation>
    <location>
        <begin position="173"/>
        <end position="179"/>
    </location>
</feature>
<feature type="splice variant" id="VSP_040926" description="In isoform 3." evidence="4 5">
    <location>
        <begin position="180"/>
        <end position="640"/>
    </location>
</feature>
<feature type="splice variant" id="VSP_040927" description="In isoform 4." evidence="5">
    <original>PNGGFQSGGSYHPGRKRSKTQTPQQRSVSSQEEEHSSPVKAP</original>
    <variation>GRAQQPGKGPLCEENPHAGQDCHPREAPSSRERPQLQEDPGS</variation>
    <location>
        <begin position="191"/>
        <end position="232"/>
    </location>
</feature>
<feature type="splice variant" id="VSP_040928" description="In isoform 4." evidence="5">
    <location>
        <begin position="233"/>
        <end position="640"/>
    </location>
</feature>
<feature type="sequence variant" id="VAR_043619" description="In dbSNP:rs12121759.">
    <original>S</original>
    <variation>A</variation>
    <location>
        <position position="217"/>
    </location>
</feature>
<feature type="sequence variant" id="VAR_056763" description="In dbSNP:rs12121759.">
    <original>A</original>
    <variation>S</variation>
    <location>
        <position position="455"/>
    </location>
</feature>
<feature type="sequence conflict" description="In Ref. 1; BAB71191." evidence="6" ref="1">
    <original>K</original>
    <variation>E</variation>
    <location>
        <position position="327"/>
    </location>
</feature>
<feature type="sequence conflict" description="In Ref. 1; BAB71191." evidence="6" ref="1">
    <original>E</original>
    <variation>G</variation>
    <location>
        <position position="413"/>
    </location>
</feature>
<feature type="sequence conflict" description="In Ref. 1; BAB71191." evidence="6" ref="1">
    <original>TR</original>
    <variation>NS</variation>
    <location>
        <begin position="541"/>
        <end position="542"/>
    </location>
</feature>
<feature type="sequence conflict" description="In Ref. 1; BAB71191." evidence="6" ref="1">
    <original>E</original>
    <variation>G</variation>
    <location>
        <position position="582"/>
    </location>
</feature>
<comment type="alternative products">
    <event type="alternative splicing"/>
    <isoform>
        <id>A4FU49-1</id>
        <name>1</name>
        <sequence type="displayed"/>
    </isoform>
    <isoform>
        <id>A4FU49-3</id>
        <name>2</name>
        <sequence type="described" ref="VSP_040924"/>
    </isoform>
    <isoform>
        <id>A4FU49-4</id>
        <name>3</name>
        <sequence type="described" ref="VSP_040923 VSP_040925 VSP_040926"/>
    </isoform>
    <isoform>
        <id>A4FU49-5</id>
        <name>4</name>
        <sequence type="described" ref="VSP_040927 VSP_040928"/>
    </isoform>
    <isoform>
        <id>A4FU49-6</id>
        <name>5</name>
        <sequence type="described" ref="VSP_045936"/>
    </isoform>
</comment>
<comment type="miscellaneous">
    <molecule>Isoform 1</molecule>
    <text>Gene prediction based on EST data and similarity to mouse and macaca fascicularis orthologs.</text>
</comment>
<comment type="miscellaneous">
    <molecule>Isoform 3</molecule>
    <text evidence="6">May be produced at very low levels due to a premature stop codon in the mRNA, leading to nonsense-mediated mRNA decay.</text>
</comment>
<comment type="miscellaneous">
    <molecule>Isoform 4</molecule>
    <text evidence="6">May be produced at very low levels due to a premature stop codon in the mRNA, leading to nonsense-mediated mRNA decay.</text>
</comment>
<comment type="sequence caution" evidence="6">
    <conflict type="erroneous translation">
        <sequence resource="EMBL-CDS" id="AAI01677"/>
    </conflict>
    <text>Wrong choice of CDS.</text>
</comment>
<comment type="sequence caution" evidence="6">
    <conflict type="erroneous translation">
        <sequence resource="EMBL-CDS" id="AAI01679"/>
    </conflict>
    <text>Wrong choice of CDS.</text>
</comment>
<comment type="sequence caution" evidence="6">
    <conflict type="erroneous initiation">
        <sequence resource="EMBL-CDS" id="BAB15504"/>
    </conflict>
    <text>Truncated N-terminus.</text>
</comment>
<comment type="sequence caution" evidence="6">
    <conflict type="erroneous translation">
        <sequence resource="EMBL-CDS" id="BAB71191"/>
    </conflict>
    <text>Wrong choice of CDS.</text>
</comment>
<comment type="sequence caution" evidence="6">
    <conflict type="erroneous gene model prediction">
        <sequence resource="EMBL-CDS" id="EAX07375"/>
    </conflict>
</comment>
<comment type="sequence caution" evidence="6">
    <conflict type="erroneous gene model prediction">
        <sequence resource="EMBL-CDS" id="EAX07376"/>
    </conflict>
</comment>
<organism>
    <name type="scientific">Homo sapiens</name>
    <name type="common">Human</name>
    <dbReference type="NCBI Taxonomy" id="9606"/>
    <lineage>
        <taxon>Eukaryota</taxon>
        <taxon>Metazoa</taxon>
        <taxon>Chordata</taxon>
        <taxon>Craniata</taxon>
        <taxon>Vertebrata</taxon>
        <taxon>Euteleostomi</taxon>
        <taxon>Mammalia</taxon>
        <taxon>Eutheria</taxon>
        <taxon>Euarchontoglires</taxon>
        <taxon>Primates</taxon>
        <taxon>Haplorrhini</taxon>
        <taxon>Catarrhini</taxon>
        <taxon>Hominidae</taxon>
        <taxon>Homo</taxon>
    </lineage>
</organism>
<proteinExistence type="evidence at protein level"/>